<dbReference type="EMBL" id="X17273">
    <property type="protein sequence ID" value="CAA35174.1"/>
    <property type="molecule type" value="mRNA"/>
</dbReference>
<dbReference type="EMBL" id="M90683">
    <property type="protein sequence ID" value="AAA52673.1"/>
    <property type="molecule type" value="mRNA"/>
</dbReference>
<dbReference type="EMBL" id="J03027">
    <property type="protein sequence ID" value="AAA98745.1"/>
    <property type="molecule type" value="Genomic_DNA"/>
</dbReference>
<dbReference type="EMBL" id="AF055066">
    <property type="protein sequence ID" value="AAC24826.1"/>
    <property type="molecule type" value="Genomic_DNA"/>
</dbReference>
<dbReference type="EMBL" id="BA000025">
    <property type="protein sequence ID" value="BAB63336.1"/>
    <property type="molecule type" value="Genomic_DNA"/>
</dbReference>
<dbReference type="CCDS" id="CCDS4668.1">
    <molecule id="P17693-1"/>
</dbReference>
<dbReference type="PIR" id="A39953">
    <property type="entry name" value="A39953"/>
</dbReference>
<dbReference type="RefSeq" id="NP_001371219.1">
    <molecule id="P17693-1"/>
    <property type="nucleotide sequence ID" value="NM_001384290.1"/>
</dbReference>
<dbReference type="RefSeq" id="NP_002118.1">
    <molecule id="P17693-1"/>
    <property type="nucleotide sequence ID" value="NM_002127.6"/>
</dbReference>
<dbReference type="RefSeq" id="XP_054185794.1">
    <molecule id="P17693-1"/>
    <property type="nucleotide sequence ID" value="XM_054329819.1"/>
</dbReference>
<dbReference type="RefSeq" id="XP_054185795.1">
    <molecule id="P17693-1"/>
    <property type="nucleotide sequence ID" value="XM_054329820.1"/>
</dbReference>
<dbReference type="RefSeq" id="XP_054185796.1">
    <molecule id="P17693-2"/>
    <property type="nucleotide sequence ID" value="XM_054329821.1"/>
</dbReference>
<dbReference type="RefSeq" id="XP_054185797.1">
    <molecule id="P17693-2"/>
    <property type="nucleotide sequence ID" value="XM_054329822.1"/>
</dbReference>
<dbReference type="RefSeq" id="XP_054187048.1">
    <molecule id="P17693-1"/>
    <property type="nucleotide sequence ID" value="XM_054331073.1"/>
</dbReference>
<dbReference type="RefSeq" id="XP_054187049.1">
    <molecule id="P17693-1"/>
    <property type="nucleotide sequence ID" value="XM_054331074.1"/>
</dbReference>
<dbReference type="RefSeq" id="XP_054187050.1">
    <molecule id="P17693-2"/>
    <property type="nucleotide sequence ID" value="XM_054331075.1"/>
</dbReference>
<dbReference type="RefSeq" id="XP_054187051.1">
    <molecule id="P17693-2"/>
    <property type="nucleotide sequence ID" value="XM_054331076.1"/>
</dbReference>
<dbReference type="RefSeq" id="XP_054187313.1">
    <molecule id="P17693-1"/>
    <property type="nucleotide sequence ID" value="XM_054331338.1"/>
</dbReference>
<dbReference type="RefSeq" id="XP_054187314.1">
    <molecule id="P17693-1"/>
    <property type="nucleotide sequence ID" value="XM_054331339.1"/>
</dbReference>
<dbReference type="RefSeq" id="XP_054187315.1">
    <molecule id="P17693-2"/>
    <property type="nucleotide sequence ID" value="XM_054331340.1"/>
</dbReference>
<dbReference type="RefSeq" id="XP_054187316.1">
    <molecule id="P17693-2"/>
    <property type="nucleotide sequence ID" value="XM_054331341.1"/>
</dbReference>
<dbReference type="PDB" id="1YDP">
    <property type="method" value="X-ray"/>
    <property type="resolution" value="1.90 A"/>
    <property type="chains" value="A=26-300"/>
</dbReference>
<dbReference type="PDB" id="2D31">
    <property type="method" value="X-ray"/>
    <property type="resolution" value="3.20 A"/>
    <property type="chains" value="A/D=25-300"/>
</dbReference>
<dbReference type="PDB" id="2DYP">
    <property type="method" value="X-ray"/>
    <property type="resolution" value="2.50 A"/>
    <property type="chains" value="A=25-300"/>
</dbReference>
<dbReference type="PDB" id="3BZE">
    <property type="method" value="X-ray"/>
    <property type="resolution" value="2.50 A"/>
    <property type="chains" value="P/Q/R/S=3-11"/>
</dbReference>
<dbReference type="PDB" id="3CDG">
    <property type="method" value="X-ray"/>
    <property type="resolution" value="3.40 A"/>
    <property type="chains" value="P/Q=3-11"/>
</dbReference>
<dbReference type="PDB" id="3CII">
    <property type="method" value="X-ray"/>
    <property type="resolution" value="4.41 A"/>
    <property type="chains" value="C/F=3-11"/>
</dbReference>
<dbReference type="PDB" id="3KYN">
    <property type="method" value="X-ray"/>
    <property type="resolution" value="2.40 A"/>
    <property type="chains" value="A=26-299"/>
</dbReference>
<dbReference type="PDB" id="3KYO">
    <property type="method" value="X-ray"/>
    <property type="resolution" value="1.70 A"/>
    <property type="chains" value="A/C=26-298"/>
</dbReference>
<dbReference type="PDB" id="6AEE">
    <property type="method" value="X-ray"/>
    <property type="resolution" value="3.30 A"/>
    <property type="chains" value="A/D=25-300"/>
</dbReference>
<dbReference type="PDB" id="6K60">
    <property type="method" value="X-ray"/>
    <property type="resolution" value="3.15 A"/>
    <property type="chains" value="A/E=25-300"/>
</dbReference>
<dbReference type="PDBsum" id="1YDP"/>
<dbReference type="PDBsum" id="2D31"/>
<dbReference type="PDBsum" id="2DYP"/>
<dbReference type="PDBsum" id="3BZE"/>
<dbReference type="PDBsum" id="3CDG"/>
<dbReference type="PDBsum" id="3CII"/>
<dbReference type="PDBsum" id="3KYN"/>
<dbReference type="PDBsum" id="3KYO"/>
<dbReference type="PDBsum" id="6AEE"/>
<dbReference type="PDBsum" id="6K60"/>
<dbReference type="SMR" id="P17693"/>
<dbReference type="BioGRID" id="109380">
    <property type="interactions" value="132"/>
</dbReference>
<dbReference type="DIP" id="DIP-46121N"/>
<dbReference type="FunCoup" id="P17693">
    <property type="interactions" value="722"/>
</dbReference>
<dbReference type="IntAct" id="P17693">
    <property type="interactions" value="112"/>
</dbReference>
<dbReference type="MINT" id="P17693"/>
<dbReference type="STRING" id="9606.ENSP00000366024"/>
<dbReference type="GlyCosmos" id="P17693">
    <property type="glycosylation" value="1 site, No reported glycans"/>
</dbReference>
<dbReference type="GlyGen" id="P17693">
    <property type="glycosylation" value="1 site"/>
</dbReference>
<dbReference type="iPTMnet" id="P17693"/>
<dbReference type="PhosphoSitePlus" id="P17693"/>
<dbReference type="SwissPalm" id="P17693"/>
<dbReference type="BioMuta" id="HLA-G"/>
<dbReference type="DMDM" id="122132"/>
<dbReference type="jPOST" id="P17693"/>
<dbReference type="MassIVE" id="P17693"/>
<dbReference type="PaxDb" id="9606-ENSP00000412927"/>
<dbReference type="PeptideAtlas" id="P17693"/>
<dbReference type="ProteomicsDB" id="53506"/>
<dbReference type="Pumba" id="P17693"/>
<dbReference type="ABCD" id="P17693">
    <property type="antibodies" value="49 sequenced antibodies"/>
</dbReference>
<dbReference type="Antibodypedia" id="4253">
    <property type="antibodies" value="1495 antibodies from 40 providers"/>
</dbReference>
<dbReference type="DNASU" id="3135"/>
<dbReference type="Ensembl" id="ENST00000360323.11">
    <molecule id="P17693-1"/>
    <property type="protein sequence ID" value="ENSP00000353472.6"/>
    <property type="gene ID" value="ENSG00000204632.13"/>
</dbReference>
<dbReference type="Ensembl" id="ENST00000376815.3">
    <molecule id="P17693-3"/>
    <property type="protein sequence ID" value="ENSP00000366011.3"/>
    <property type="gene ID" value="ENSG00000204632.13"/>
</dbReference>
<dbReference type="Ensembl" id="ENST00000376818.7">
    <molecule id="P17693-2"/>
    <property type="protein sequence ID" value="ENSP00000366014.3"/>
    <property type="gene ID" value="ENSG00000204632.13"/>
</dbReference>
<dbReference type="Ensembl" id="ENST00000383621.8">
    <molecule id="P17693-1"/>
    <property type="protein sequence ID" value="ENSP00000373116.4"/>
    <property type="gene ID" value="ENSG00000206506.10"/>
</dbReference>
<dbReference type="Ensembl" id="ENST00000383622.8">
    <molecule id="P17693-3"/>
    <property type="protein sequence ID" value="ENSP00000373117.4"/>
    <property type="gene ID" value="ENSG00000206506.10"/>
</dbReference>
<dbReference type="Ensembl" id="ENST00000383623.8">
    <molecule id="P17693-2"/>
    <property type="protein sequence ID" value="ENSP00000373118.4"/>
    <property type="gene ID" value="ENSG00000206506.10"/>
</dbReference>
<dbReference type="Ensembl" id="ENST00000412263.6">
    <molecule id="P17693-2"/>
    <property type="protein sequence ID" value="ENSP00000397733.2"/>
    <property type="gene ID" value="ENSG00000237216.8"/>
</dbReference>
<dbReference type="Ensembl" id="ENST00000415687.6">
    <molecule id="P17693-3"/>
    <property type="protein sequence ID" value="ENSP00000389969.2"/>
    <property type="gene ID" value="ENSG00000237216.8"/>
</dbReference>
<dbReference type="Ensembl" id="ENST00000423011.6">
    <molecule id="P17693-1"/>
    <property type="protein sequence ID" value="ENSP00000389522.2"/>
    <property type="gene ID" value="ENSG00000233095.8"/>
</dbReference>
<dbReference type="Ensembl" id="ENST00000423373.6">
    <molecule id="P17693-1"/>
    <property type="protein sequence ID" value="ENSP00000405238.2"/>
    <property type="gene ID" value="ENSG00000235346.9"/>
</dbReference>
<dbReference type="Ensembl" id="ENST00000426863.6">
    <molecule id="P17693-2"/>
    <property type="protein sequence ID" value="ENSP00000392075.2"/>
    <property type="gene ID" value="ENSG00000235680.8"/>
</dbReference>
<dbReference type="Ensembl" id="ENST00000428952.6">
    <molecule id="P17693-1"/>
    <property type="protein sequence ID" value="ENSP00000388176.2"/>
    <property type="gene ID" value="ENSG00000235680.8"/>
</dbReference>
<dbReference type="Ensembl" id="ENST00000429890.6">
    <molecule id="P17693-3"/>
    <property type="protein sequence ID" value="ENSP00000401326.2"/>
    <property type="gene ID" value="ENSG00000235680.8"/>
</dbReference>
<dbReference type="Ensembl" id="ENST00000430253.5">
    <molecule id="P17693-2"/>
    <property type="protein sequence ID" value="ENSP00000396594.1"/>
    <property type="gene ID" value="ENSG00000233095.8"/>
</dbReference>
<dbReference type="Ensembl" id="ENST00000434907.6">
    <molecule id="P17693-2"/>
    <property type="protein sequence ID" value="ENSP00000408461.2"/>
    <property type="gene ID" value="ENSG00000233095.8"/>
</dbReference>
<dbReference type="Ensembl" id="ENST00000444098.6">
    <molecule id="P17693-1"/>
    <property type="protein sequence ID" value="ENSP00000398200.2"/>
    <property type="gene ID" value="ENSG00000230413.9"/>
</dbReference>
<dbReference type="Ensembl" id="ENST00000445373.6">
    <molecule id="P17693-3"/>
    <property type="protein sequence ID" value="ENSP00000416408.2"/>
    <property type="gene ID" value="ENSG00000230413.9"/>
</dbReference>
<dbReference type="Ensembl" id="ENST00000448306.6">
    <molecule id="P17693-3"/>
    <property type="protein sequence ID" value="ENSP00000413926.2"/>
    <property type="gene ID" value="ENSG00000233095.8"/>
</dbReference>
<dbReference type="Ensembl" id="ENST00000449127.6">
    <molecule id="P17693-1"/>
    <property type="protein sequence ID" value="ENSP00000408773.2"/>
    <property type="gene ID" value="ENSG00000237216.8"/>
</dbReference>
<dbReference type="Ensembl" id="ENST00000452577.6">
    <molecule id="P17693-2"/>
    <property type="protein sequence ID" value="ENSP00000415905.2"/>
    <property type="gene ID" value="ENSG00000235346.9"/>
</dbReference>
<dbReference type="Ensembl" id="ENST00000452715.6">
    <molecule id="P17693-2"/>
    <property type="protein sequence ID" value="ENSP00000390678.2"/>
    <property type="gene ID" value="ENSG00000230413.9"/>
</dbReference>
<dbReference type="Ensembl" id="ENST00000457132.6">
    <molecule id="P17693-3"/>
    <property type="protein sequence ID" value="ENSP00000410247.2"/>
    <property type="gene ID" value="ENSG00000235346.9"/>
</dbReference>
<dbReference type="Ensembl" id="ENST00000466488.5">
    <molecule id="P17693-2"/>
    <property type="protein sequence ID" value="ENSP00000433426.1"/>
    <property type="gene ID" value="ENSG00000237216.8"/>
</dbReference>
<dbReference type="Ensembl" id="ENST00000467814.5">
    <molecule id="P17693-2"/>
    <property type="protein sequence ID" value="ENSP00000434622.1"/>
    <property type="gene ID" value="ENSG00000235680.8"/>
</dbReference>
<dbReference type="Ensembl" id="ENST00000469347.5">
    <molecule id="P17693-2"/>
    <property type="protein sequence ID" value="ENSP00000437036.1"/>
    <property type="gene ID" value="ENSG00000235346.9"/>
</dbReference>
<dbReference type="Ensembl" id="ENST00000469472.5">
    <molecule id="P17693-2"/>
    <property type="protein sequence ID" value="ENSP00000432220.1"/>
    <property type="gene ID" value="ENSG00000206506.10"/>
</dbReference>
<dbReference type="Ensembl" id="ENST00000478519.5">
    <molecule id="P17693-2"/>
    <property type="protein sequence ID" value="ENSP00000436375.1"/>
    <property type="gene ID" value="ENSG00000204632.13"/>
</dbReference>
<dbReference type="Ensembl" id="ENST00000486553.5">
    <molecule id="P17693-2"/>
    <property type="protein sequence ID" value="ENSP00000432239.1"/>
    <property type="gene ID" value="ENSG00000230413.9"/>
</dbReference>
<dbReference type="Ensembl" id="ENST00000546545.2">
    <molecule id="P17693-1"/>
    <property type="protein sequence ID" value="ENSP00000447762.1"/>
    <property type="gene ID" value="ENSG00000230413.9"/>
</dbReference>
<dbReference type="Ensembl" id="ENST00000546634.1">
    <molecule id="P17693-1"/>
    <property type="protein sequence ID" value="ENSP00000447780.1"/>
    <property type="gene ID" value="ENSG00000235346.9"/>
</dbReference>
<dbReference type="Ensembl" id="ENST00000547241.2">
    <molecule id="P17693-1"/>
    <property type="protein sequence ID" value="ENSP00000448085.1"/>
    <property type="gene ID" value="ENSG00000233095.8"/>
</dbReference>
<dbReference type="Ensembl" id="ENST00000547931.1">
    <molecule id="P17693-1"/>
    <property type="protein sequence ID" value="ENSP00000448363.1"/>
    <property type="gene ID" value="ENSG00000237216.8"/>
</dbReference>
<dbReference type="Ensembl" id="ENST00000550897.1">
    <molecule id="P17693-1"/>
    <property type="protein sequence ID" value="ENSP00000449903.1"/>
    <property type="gene ID" value="ENSG00000235680.8"/>
</dbReference>
<dbReference type="Ensembl" id="ENST00000553052.2">
    <molecule id="P17693-1"/>
    <property type="protein sequence ID" value="ENSP00000449291.1"/>
    <property type="gene ID" value="ENSG00000206506.10"/>
</dbReference>
<dbReference type="Ensembl" id="ENST00000622601.4">
    <molecule id="P17693-3"/>
    <property type="protein sequence ID" value="ENSP00000479399.1"/>
    <property type="gene ID" value="ENSG00000276051.4"/>
</dbReference>
<dbReference type="GeneID" id="3135"/>
<dbReference type="KEGG" id="hsa:3135"/>
<dbReference type="MANE-Select" id="ENST00000360323.11">
    <property type="protein sequence ID" value="ENSP00000353472.6"/>
    <property type="RefSeq nucleotide sequence ID" value="NM_001384290.1"/>
    <property type="RefSeq protein sequence ID" value="NP_001371219.1"/>
</dbReference>
<dbReference type="AGR" id="HGNC:4964"/>
<dbReference type="CTD" id="3135"/>
<dbReference type="DisGeNET" id="3135"/>
<dbReference type="GeneCards" id="HLA-G"/>
<dbReference type="HGNC" id="HGNC:4964">
    <property type="gene designation" value="HLA-G"/>
</dbReference>
<dbReference type="HPA" id="ENSG00000204632">
    <property type="expression patterns" value="Group enriched (pituitary gland, placenta)"/>
</dbReference>
<dbReference type="MalaCards" id="HLA-G"/>
<dbReference type="MIM" id="142871">
    <property type="type" value="gene"/>
</dbReference>
<dbReference type="neXtProt" id="NX_P17693"/>
<dbReference type="OpenTargets" id="ENSG00000204632"/>
<dbReference type="PharmGKB" id="PA35083"/>
<dbReference type="VEuPathDB" id="HostDB:ENSG00000204632"/>
<dbReference type="eggNOG" id="ENOG502RQEK">
    <property type="taxonomic scope" value="Eukaryota"/>
</dbReference>
<dbReference type="GeneTree" id="ENSGT01120000271826"/>
<dbReference type="HOGENOM" id="CLU_047501_1_1_1"/>
<dbReference type="InParanoid" id="P17693"/>
<dbReference type="OMA" id="ERNTQNA"/>
<dbReference type="OrthoDB" id="9447187at2759"/>
<dbReference type="PAN-GO" id="P17693">
    <property type="GO annotations" value="8 GO annotations based on evolutionary models"/>
</dbReference>
<dbReference type="PhylomeDB" id="P17693"/>
<dbReference type="TreeFam" id="TF336617"/>
<dbReference type="PathwayCommons" id="P17693"/>
<dbReference type="Reactome" id="R-HSA-1236974">
    <property type="pathway name" value="ER-Phagosome pathway"/>
</dbReference>
<dbReference type="Reactome" id="R-HSA-1236977">
    <property type="pathway name" value="Endosomal/Vacuolar pathway"/>
</dbReference>
<dbReference type="Reactome" id="R-HSA-198933">
    <property type="pathway name" value="Immunoregulatory interactions between a Lymphoid and a non-Lymphoid cell"/>
</dbReference>
<dbReference type="Reactome" id="R-HSA-877300">
    <property type="pathway name" value="Interferon gamma signaling"/>
</dbReference>
<dbReference type="Reactome" id="R-HSA-909733">
    <property type="pathway name" value="Interferon alpha/beta signaling"/>
</dbReference>
<dbReference type="Reactome" id="R-HSA-9705671">
    <property type="pathway name" value="SARS-CoV-2 activates/modulates innate and adaptive immune responses"/>
</dbReference>
<dbReference type="Reactome" id="R-HSA-983170">
    <property type="pathway name" value="Antigen Presentation: Folding, assembly and peptide loading of class I MHC"/>
</dbReference>
<dbReference type="SignaLink" id="P17693"/>
<dbReference type="SIGNOR" id="P17693"/>
<dbReference type="BioGRID-ORCS" id="3135">
    <property type="hits" value="7 hits in 1145 CRISPR screens"/>
</dbReference>
<dbReference type="ChiTaRS" id="HLA-G">
    <property type="organism name" value="human"/>
</dbReference>
<dbReference type="EvolutionaryTrace" id="P17693"/>
<dbReference type="GeneWiki" id="HLA-G"/>
<dbReference type="GenomeRNAi" id="3135"/>
<dbReference type="Pharos" id="P17693">
    <property type="development level" value="Tbio"/>
</dbReference>
<dbReference type="PRO" id="PR:P17693"/>
<dbReference type="Proteomes" id="UP000005640">
    <property type="component" value="Chromosome 6"/>
</dbReference>
<dbReference type="RNAct" id="P17693">
    <property type="molecule type" value="protein"/>
</dbReference>
<dbReference type="Bgee" id="ENSG00000204632">
    <property type="expression patterns" value="Expressed in placenta and 94 other cell types or tissues"/>
</dbReference>
<dbReference type="ExpressionAtlas" id="P17693">
    <property type="expression patterns" value="baseline and differential"/>
</dbReference>
<dbReference type="GO" id="GO:0033106">
    <property type="term" value="C:cis-Golgi network membrane"/>
    <property type="evidence" value="ECO:0000314"/>
    <property type="project" value="UniProtKB"/>
</dbReference>
<dbReference type="GO" id="GO:0005769">
    <property type="term" value="C:early endosome"/>
    <property type="evidence" value="ECO:0000314"/>
    <property type="project" value="UniProtKB"/>
</dbReference>
<dbReference type="GO" id="GO:0031901">
    <property type="term" value="C:early endosome membrane"/>
    <property type="evidence" value="ECO:0000304"/>
    <property type="project" value="Reactome"/>
</dbReference>
<dbReference type="GO" id="GO:0012507">
    <property type="term" value="C:ER to Golgi transport vesicle membrane"/>
    <property type="evidence" value="ECO:0000304"/>
    <property type="project" value="Reactome"/>
</dbReference>
<dbReference type="GO" id="GO:0009897">
    <property type="term" value="C:external side of plasma membrane"/>
    <property type="evidence" value="ECO:0000318"/>
    <property type="project" value="GO_Central"/>
</dbReference>
<dbReference type="GO" id="GO:0005615">
    <property type="term" value="C:extracellular space"/>
    <property type="evidence" value="ECO:0000318"/>
    <property type="project" value="GO_Central"/>
</dbReference>
<dbReference type="GO" id="GO:0031527">
    <property type="term" value="C:filopodium membrane"/>
    <property type="evidence" value="ECO:0007669"/>
    <property type="project" value="UniProtKB-SubCell"/>
</dbReference>
<dbReference type="GO" id="GO:0000139">
    <property type="term" value="C:Golgi membrane"/>
    <property type="evidence" value="ECO:0000304"/>
    <property type="project" value="Reactome"/>
</dbReference>
<dbReference type="GO" id="GO:0098553">
    <property type="term" value="C:lumenal side of endoplasmic reticulum membrane"/>
    <property type="evidence" value="ECO:0000304"/>
    <property type="project" value="Reactome"/>
</dbReference>
<dbReference type="GO" id="GO:0016020">
    <property type="term" value="C:membrane"/>
    <property type="evidence" value="ECO:0007005"/>
    <property type="project" value="UniProtKB"/>
</dbReference>
<dbReference type="GO" id="GO:0042612">
    <property type="term" value="C:MHC class I protein complex"/>
    <property type="evidence" value="ECO:0007669"/>
    <property type="project" value="UniProtKB-KW"/>
</dbReference>
<dbReference type="GO" id="GO:0030670">
    <property type="term" value="C:phagocytic vesicle membrane"/>
    <property type="evidence" value="ECO:0000304"/>
    <property type="project" value="Reactome"/>
</dbReference>
<dbReference type="GO" id="GO:0005886">
    <property type="term" value="C:plasma membrane"/>
    <property type="evidence" value="ECO:0000314"/>
    <property type="project" value="UniProtKB"/>
</dbReference>
<dbReference type="GO" id="GO:0055038">
    <property type="term" value="C:recycling endosome membrane"/>
    <property type="evidence" value="ECO:0000304"/>
    <property type="project" value="Reactome"/>
</dbReference>
<dbReference type="GO" id="GO:0042610">
    <property type="term" value="F:CD8 receptor binding"/>
    <property type="evidence" value="ECO:0000314"/>
    <property type="project" value="UniProtKB"/>
</dbReference>
<dbReference type="GO" id="GO:0042802">
    <property type="term" value="F:identical protein binding"/>
    <property type="evidence" value="ECO:0000353"/>
    <property type="project" value="IntAct"/>
</dbReference>
<dbReference type="GO" id="GO:0042605">
    <property type="term" value="F:peptide antigen binding"/>
    <property type="evidence" value="ECO:0000314"/>
    <property type="project" value="UniProtKB"/>
</dbReference>
<dbReference type="GO" id="GO:0042803">
    <property type="term" value="F:protein homodimerization activity"/>
    <property type="evidence" value="ECO:0000314"/>
    <property type="project" value="UniProtKB"/>
</dbReference>
<dbReference type="GO" id="GO:0005102">
    <property type="term" value="F:signaling receptor binding"/>
    <property type="evidence" value="ECO:0000353"/>
    <property type="project" value="UniProtKB"/>
</dbReference>
<dbReference type="GO" id="GO:0002486">
    <property type="term" value="P:antigen processing and presentation of endogenous peptide antigen via MHC class I via ER pathway, TAP-independent"/>
    <property type="evidence" value="ECO:0000318"/>
    <property type="project" value="GO_Central"/>
</dbReference>
<dbReference type="GO" id="GO:0002476">
    <property type="term" value="P:antigen processing and presentation of endogenous peptide antigen via MHC class Ib"/>
    <property type="evidence" value="ECO:0000314"/>
    <property type="project" value="UniProtKB"/>
</dbReference>
<dbReference type="GO" id="GO:0006968">
    <property type="term" value="P:cellular defense response"/>
    <property type="evidence" value="ECO:0000304"/>
    <property type="project" value="ProtInc"/>
</dbReference>
<dbReference type="GO" id="GO:0006955">
    <property type="term" value="P:immune response"/>
    <property type="evidence" value="ECO:0000318"/>
    <property type="project" value="GO_Central"/>
</dbReference>
<dbReference type="GO" id="GO:0002767">
    <property type="term" value="P:immune response-inhibiting cell surface receptor signaling pathway"/>
    <property type="evidence" value="ECO:0000314"/>
    <property type="project" value="BHF-UCL"/>
</dbReference>
<dbReference type="GO" id="GO:0016525">
    <property type="term" value="P:negative regulation of angiogenesis"/>
    <property type="evidence" value="ECO:0000314"/>
    <property type="project" value="UniProtKB"/>
</dbReference>
<dbReference type="GO" id="GO:2001199">
    <property type="term" value="P:negative regulation of dendritic cell differentiation"/>
    <property type="evidence" value="ECO:0000314"/>
    <property type="project" value="BHF-UCL"/>
</dbReference>
<dbReference type="GO" id="GO:0070317">
    <property type="term" value="P:negative regulation of G0 to G1 transition"/>
    <property type="evidence" value="ECO:0000314"/>
    <property type="project" value="UniProtKB"/>
</dbReference>
<dbReference type="GO" id="GO:0050777">
    <property type="term" value="P:negative regulation of immune response"/>
    <property type="evidence" value="ECO:0000305"/>
    <property type="project" value="UniProtKB"/>
</dbReference>
<dbReference type="GO" id="GO:0045953">
    <property type="term" value="P:negative regulation of natural killer cell mediated cytotoxicity"/>
    <property type="evidence" value="ECO:0000314"/>
    <property type="project" value="UniProtKB"/>
</dbReference>
<dbReference type="GO" id="GO:0051898">
    <property type="term" value="P:negative regulation of phosphatidylinositol 3-kinase/protein kinase B signal transduction"/>
    <property type="evidence" value="ECO:0000314"/>
    <property type="project" value="UniProtKB"/>
</dbReference>
<dbReference type="GO" id="GO:0001915">
    <property type="term" value="P:negative regulation of T cell mediated cytotoxicity"/>
    <property type="evidence" value="ECO:0000314"/>
    <property type="project" value="UniProtKB"/>
</dbReference>
<dbReference type="GO" id="GO:0042130">
    <property type="term" value="P:negative regulation of T cell proliferation"/>
    <property type="evidence" value="ECO:0000314"/>
    <property type="project" value="BHF-UCL"/>
</dbReference>
<dbReference type="GO" id="GO:0002451">
    <property type="term" value="P:peripheral B cell tolerance induction"/>
    <property type="evidence" value="ECO:0000314"/>
    <property type="project" value="UniProtKB"/>
</dbReference>
<dbReference type="GO" id="GO:2000774">
    <property type="term" value="P:positive regulation of cellular senescence"/>
    <property type="evidence" value="ECO:0000314"/>
    <property type="project" value="UniProtKB"/>
</dbReference>
<dbReference type="GO" id="GO:2000353">
    <property type="term" value="P:positive regulation of endothelial cell apoptotic process"/>
    <property type="evidence" value="ECO:0000314"/>
    <property type="project" value="UniProtKB"/>
</dbReference>
<dbReference type="GO" id="GO:0032735">
    <property type="term" value="P:positive regulation of interleukin-12 production"/>
    <property type="evidence" value="ECO:0000314"/>
    <property type="project" value="BHF-UCL"/>
</dbReference>
<dbReference type="GO" id="GO:0060907">
    <property type="term" value="P:positive regulation of macrophage cytokine production"/>
    <property type="evidence" value="ECO:0000314"/>
    <property type="project" value="UniProtKB"/>
</dbReference>
<dbReference type="GO" id="GO:0002729">
    <property type="term" value="P:positive regulation of natural killer cell cytokine production"/>
    <property type="evidence" value="ECO:0000314"/>
    <property type="project" value="UniProtKB"/>
</dbReference>
<dbReference type="GO" id="GO:0045591">
    <property type="term" value="P:positive regulation of regulatory T cell differentiation"/>
    <property type="evidence" value="ECO:0000315"/>
    <property type="project" value="BHF-UCL"/>
</dbReference>
<dbReference type="GO" id="GO:0001916">
    <property type="term" value="P:positive regulation of T cell mediated cytotoxicity"/>
    <property type="evidence" value="ECO:0000318"/>
    <property type="project" value="GO_Central"/>
</dbReference>
<dbReference type="GO" id="GO:0002666">
    <property type="term" value="P:positive regulation of T cell tolerance induction"/>
    <property type="evidence" value="ECO:0000315"/>
    <property type="project" value="BHF-UCL"/>
</dbReference>
<dbReference type="GO" id="GO:0002645">
    <property type="term" value="P:positive regulation of tolerance induction"/>
    <property type="evidence" value="ECO:0000315"/>
    <property type="project" value="UniProtKB"/>
</dbReference>
<dbReference type="GO" id="GO:0042270">
    <property type="term" value="P:protection from natural killer cell mediated cytotoxicity"/>
    <property type="evidence" value="ECO:0000314"/>
    <property type="project" value="UniProtKB"/>
</dbReference>
<dbReference type="GO" id="GO:0070207">
    <property type="term" value="P:protein homotrimerization"/>
    <property type="evidence" value="ECO:0000314"/>
    <property type="project" value="UniProtKB"/>
</dbReference>
<dbReference type="CDD" id="cd21022">
    <property type="entry name" value="IgC1_MHC_Ia_HLA-G"/>
    <property type="match status" value="1"/>
</dbReference>
<dbReference type="FunFam" id="2.60.40.10:FF:000014">
    <property type="entry name" value="H-2 class I histocompatibility antigen, alpha chain"/>
    <property type="match status" value="1"/>
</dbReference>
<dbReference type="FunFam" id="3.30.500.10:FF:000001">
    <property type="entry name" value="H-2 class I histocompatibility antigen, alpha chain"/>
    <property type="match status" value="1"/>
</dbReference>
<dbReference type="Gene3D" id="2.60.40.10">
    <property type="entry name" value="Immunoglobulins"/>
    <property type="match status" value="1"/>
</dbReference>
<dbReference type="Gene3D" id="3.30.500.10">
    <property type="entry name" value="MHC class I-like antigen recognition-like"/>
    <property type="match status" value="1"/>
</dbReference>
<dbReference type="InterPro" id="IPR007110">
    <property type="entry name" value="Ig-like_dom"/>
</dbReference>
<dbReference type="InterPro" id="IPR036179">
    <property type="entry name" value="Ig-like_dom_sf"/>
</dbReference>
<dbReference type="InterPro" id="IPR013783">
    <property type="entry name" value="Ig-like_fold"/>
</dbReference>
<dbReference type="InterPro" id="IPR003006">
    <property type="entry name" value="Ig/MHC_CS"/>
</dbReference>
<dbReference type="InterPro" id="IPR003597">
    <property type="entry name" value="Ig_C1-set"/>
</dbReference>
<dbReference type="InterPro" id="IPR050208">
    <property type="entry name" value="MHC_class-I_related"/>
</dbReference>
<dbReference type="InterPro" id="IPR011161">
    <property type="entry name" value="MHC_I-like_Ag-recog"/>
</dbReference>
<dbReference type="InterPro" id="IPR037055">
    <property type="entry name" value="MHC_I-like_Ag-recog_sf"/>
</dbReference>
<dbReference type="InterPro" id="IPR011162">
    <property type="entry name" value="MHC_I/II-like_Ag-recog"/>
</dbReference>
<dbReference type="InterPro" id="IPR001039">
    <property type="entry name" value="MHC_I_a_a1/a2"/>
</dbReference>
<dbReference type="PANTHER" id="PTHR16675:SF169">
    <property type="entry name" value="HLA CLASS I HISTOCOMPATIBILITY ANTIGEN, ALPHA CHAIN G"/>
    <property type="match status" value="1"/>
</dbReference>
<dbReference type="PANTHER" id="PTHR16675">
    <property type="entry name" value="MHC CLASS I-RELATED"/>
    <property type="match status" value="1"/>
</dbReference>
<dbReference type="Pfam" id="PF07654">
    <property type="entry name" value="C1-set"/>
    <property type="match status" value="1"/>
</dbReference>
<dbReference type="Pfam" id="PF00129">
    <property type="entry name" value="MHC_I"/>
    <property type="match status" value="1"/>
</dbReference>
<dbReference type="PRINTS" id="PR01638">
    <property type="entry name" value="MHCCLASSI"/>
</dbReference>
<dbReference type="SMART" id="SM00407">
    <property type="entry name" value="IGc1"/>
    <property type="match status" value="1"/>
</dbReference>
<dbReference type="SUPFAM" id="SSF48726">
    <property type="entry name" value="Immunoglobulin"/>
    <property type="match status" value="1"/>
</dbReference>
<dbReference type="SUPFAM" id="SSF54452">
    <property type="entry name" value="MHC antigen-recognition domain"/>
    <property type="match status" value="1"/>
</dbReference>
<dbReference type="PROSITE" id="PS50835">
    <property type="entry name" value="IG_LIKE"/>
    <property type="match status" value="1"/>
</dbReference>
<dbReference type="PROSITE" id="PS00290">
    <property type="entry name" value="IG_MHC"/>
    <property type="match status" value="1"/>
</dbReference>
<protein>
    <recommendedName>
        <fullName>HLA class I histocompatibility antigen, alpha chain G</fullName>
    </recommendedName>
    <alternativeName>
        <fullName>HLA G antigen</fullName>
    </alternativeName>
    <alternativeName>
        <fullName>MHC class I antigen G</fullName>
    </alternativeName>
    <component>
        <recommendedName>
            <fullName>Soluble HLA class I histocompatibility antigen, alpha chain G</fullName>
            <shortName evidence="39">sHLA-G</shortName>
        </recommendedName>
    </component>
</protein>
<feature type="signal peptide" evidence="1">
    <location>
        <begin position="1"/>
        <end position="24"/>
    </location>
</feature>
<feature type="chain" id="PRO_0000018886" description="HLA class I histocompatibility antigen, alpha chain G">
    <location>
        <begin position="25"/>
        <end position="338"/>
    </location>
</feature>
<feature type="chain" id="PRO_0000445908" description="Soluble HLA class I histocompatibility antigen, alpha chain G" evidence="23">
    <location>
        <begin status="unknown"/>
        <end position="338"/>
    </location>
</feature>
<feature type="topological domain" description="Extracellular" evidence="1">
    <location>
        <begin position="25"/>
        <end position="308"/>
    </location>
</feature>
<feature type="transmembrane region" description="Helical" evidence="1">
    <location>
        <begin position="309"/>
        <end position="332"/>
    </location>
</feature>
<feature type="topological domain" description="Cytoplasmic" evidence="1">
    <location>
        <begin position="333"/>
        <end position="338"/>
    </location>
</feature>
<feature type="domain" description="Ig-like C1-type">
    <location>
        <begin position="209"/>
        <end position="299"/>
    </location>
</feature>
<feature type="region of interest" description="VL9 epitope" evidence="29">
    <location>
        <begin position="3"/>
        <end position="11"/>
    </location>
</feature>
<feature type="region of interest" description="Alpha-1">
    <location>
        <begin position="25"/>
        <end position="114"/>
    </location>
</feature>
<feature type="region of interest" description="Alpha-2">
    <location>
        <begin position="115"/>
        <end position="206"/>
    </location>
</feature>
<feature type="region of interest" description="Alpha-3">
    <location>
        <begin position="207"/>
        <end position="298"/>
    </location>
</feature>
<feature type="region of interest" description="Connecting peptide">
    <location>
        <begin position="299"/>
        <end position="308"/>
    </location>
</feature>
<feature type="short sequence motif" description="ER-retrieval signal" evidence="6">
    <location>
        <begin position="334"/>
        <end position="336"/>
    </location>
</feature>
<feature type="binding site" evidence="12 19">
    <location>
        <position position="31"/>
    </location>
    <ligand>
        <name>a peptide antigen</name>
        <dbReference type="ChEBI" id="CHEBI:166823"/>
        <note>self-peptide antigen</note>
    </ligand>
</feature>
<feature type="binding site" evidence="12">
    <location>
        <position position="94"/>
    </location>
    <ligand>
        <name>a peptide antigen</name>
        <dbReference type="ChEBI" id="CHEBI:166823"/>
        <note>self-peptide antigen</note>
    </ligand>
</feature>
<feature type="binding site" evidence="15">
    <location>
        <position position="101"/>
    </location>
    <ligand>
        <name>a peptide antigen</name>
        <dbReference type="ChEBI" id="CHEBI:166823"/>
        <note>self-peptide antigen</note>
    </ligand>
</feature>
<feature type="binding site" evidence="12 15 19">
    <location>
        <position position="108"/>
    </location>
    <ligand>
        <name>a peptide antigen</name>
        <dbReference type="ChEBI" id="CHEBI:166823"/>
        <note>self-peptide antigen</note>
    </ligand>
</feature>
<feature type="binding site" evidence="12 17 19">
    <location>
        <position position="167"/>
    </location>
    <ligand>
        <name>a peptide antigen</name>
        <dbReference type="ChEBI" id="CHEBI:166823"/>
        <note>self-peptide antigen</note>
    </ligand>
</feature>
<feature type="binding site" evidence="12 19">
    <location>
        <position position="170"/>
    </location>
    <ligand>
        <name>a peptide antigen</name>
        <dbReference type="ChEBI" id="CHEBI:166823"/>
        <note>self-peptide antigen</note>
    </ligand>
</feature>
<feature type="binding site" evidence="19">
    <location>
        <position position="179"/>
    </location>
    <ligand>
        <name>a peptide antigen</name>
        <dbReference type="ChEBI" id="CHEBI:166823"/>
        <note>self-peptide antigen</note>
    </ligand>
</feature>
<feature type="binding site" evidence="17">
    <location>
        <position position="180"/>
    </location>
    <ligand>
        <name>a peptide antigen</name>
        <dbReference type="ChEBI" id="CHEBI:166823"/>
        <note>self-peptide antigen</note>
    </ligand>
</feature>
<feature type="binding site" evidence="12 17 19">
    <location>
        <position position="183"/>
    </location>
    <ligand>
        <name>a peptide antigen</name>
        <dbReference type="ChEBI" id="CHEBI:166823"/>
        <note>self-peptide antigen</note>
    </ligand>
</feature>
<feature type="binding site" evidence="12 15 17 19">
    <location>
        <position position="195"/>
    </location>
    <ligand>
        <name>a peptide antigen</name>
        <dbReference type="ChEBI" id="CHEBI:166823"/>
        <note>self-peptide antigen</note>
    </ligand>
</feature>
<feature type="glycosylation site" description="N-linked (GlcNAc...) asparagine" evidence="1">
    <location>
        <position position="110"/>
    </location>
</feature>
<feature type="disulfide bond" description="Interchain" evidence="2 7 10">
    <location>
        <position position="66"/>
    </location>
</feature>
<feature type="disulfide bond" evidence="2 12 15 17 19">
    <location>
        <begin position="125"/>
        <end position="188"/>
    </location>
</feature>
<feature type="disulfide bond" description="Interchain" evidence="10">
    <location>
        <position position="171"/>
    </location>
</feature>
<feature type="disulfide bond" evidence="2 12 15 17 19">
    <location>
        <begin position="227"/>
        <end position="283"/>
    </location>
</feature>
<feature type="splice variant" id="VSP_059191" description="In isoform 3." evidence="11">
    <location>
        <begin position="115"/>
        <end position="298"/>
    </location>
</feature>
<feature type="splice variant" id="VSP_059192" description="In isoform 2 and isoform 6." evidence="11 33">
    <location>
        <begin position="115"/>
        <end position="206"/>
    </location>
</feature>
<feature type="splice variant" id="VSP_059193" description="In isoform 7." evidence="4">
    <original>S</original>
    <variation>E</variation>
    <location>
        <position position="116"/>
    </location>
</feature>
<feature type="splice variant" id="VSP_059194" description="In isoform 7." evidence="4">
    <location>
        <begin position="117"/>
        <end position="338"/>
    </location>
</feature>
<feature type="splice variant" id="VSP_059196" description="In isoform 4." evidence="32 34">
    <location>
        <begin position="207"/>
        <end position="298"/>
    </location>
</feature>
<feature type="splice variant" id="VSP_061749" description="In isoform 2." evidence="11">
    <original>D</original>
    <variation>N</variation>
    <location>
        <position position="207"/>
    </location>
</feature>
<feature type="splice variant" id="VSP_059195" description="In isoform 6." evidence="33">
    <original>D</original>
    <variation>K</variation>
    <location>
        <position position="207"/>
    </location>
</feature>
<feature type="splice variant" id="VSP_059197" description="In isoform 5 and isoform 6." evidence="33">
    <original>KQSSLPTIPIMGIVAGLVVLAAVVTGAAVAAVLWRKKSSD</original>
    <variation>SKEGDGGIMSVRESRSLSEDL</variation>
    <location>
        <begin position="299"/>
        <end position="338"/>
    </location>
</feature>
<feature type="mutagenesis site" description="Abolishes homodimerization and homotrimerization. Decreases functional interaction with LILRB1. Does not affect homodimerization of isoform 2 and its binding to LILRB2." evidence="7 10 27">
    <original>C</original>
    <variation>S</variation>
    <location>
        <position position="66"/>
    </location>
</feature>
<feature type="mutagenesis site" description="Enables TAPBP-independent transport to the cell surface." evidence="8">
    <original>E</original>
    <variation>H</variation>
    <location>
        <position position="138"/>
    </location>
</feature>
<feature type="mutagenesis site" description="Decreases TAPBP-dependent transport to the cell surface." evidence="8">
    <original>E</original>
    <variation>Q</variation>
    <location>
        <position position="138"/>
    </location>
</feature>
<feature type="mutagenesis site" description="Abolishes homodimerization. Decreases functional interaction with LILRB1." evidence="10">
    <original>C</original>
    <variation>S</variation>
    <location>
        <position position="171"/>
    </location>
</feature>
<feature type="mutagenesis site" description="Abolishes binding to COPB1 and Golgi-to-ER retrograde transport." evidence="6">
    <original>KK</original>
    <variation>AA</variation>
    <location>
        <begin position="334"/>
        <end position="335"/>
    </location>
</feature>
<feature type="strand" evidence="49">
    <location>
        <begin position="27"/>
        <end position="36"/>
    </location>
</feature>
<feature type="strand" evidence="49">
    <location>
        <begin position="41"/>
        <end position="43"/>
    </location>
</feature>
<feature type="strand" evidence="49">
    <location>
        <begin position="45"/>
        <end position="52"/>
    </location>
</feature>
<feature type="strand" evidence="49">
    <location>
        <begin position="55"/>
        <end position="61"/>
    </location>
</feature>
<feature type="strand" evidence="49">
    <location>
        <begin position="64"/>
        <end position="66"/>
    </location>
</feature>
<feature type="strand" evidence="47">
    <location>
        <begin position="70"/>
        <end position="73"/>
    </location>
</feature>
<feature type="helix" evidence="49">
    <location>
        <begin position="74"/>
        <end position="76"/>
    </location>
</feature>
<feature type="helix" evidence="49">
    <location>
        <begin position="81"/>
        <end position="108"/>
    </location>
</feature>
<feature type="strand" evidence="48">
    <location>
        <begin position="113"/>
        <end position="115"/>
    </location>
</feature>
<feature type="strand" evidence="49">
    <location>
        <begin position="118"/>
        <end position="132"/>
    </location>
</feature>
<feature type="strand" evidence="49">
    <location>
        <begin position="134"/>
        <end position="142"/>
    </location>
</feature>
<feature type="strand" evidence="49">
    <location>
        <begin position="145"/>
        <end position="150"/>
    </location>
</feature>
<feature type="strand" evidence="49">
    <location>
        <begin position="157"/>
        <end position="161"/>
    </location>
</feature>
<feature type="helix" evidence="49">
    <location>
        <begin position="162"/>
        <end position="173"/>
    </location>
</feature>
<feature type="helix" evidence="49">
    <location>
        <begin position="176"/>
        <end position="185"/>
    </location>
</feature>
<feature type="helix" evidence="49">
    <location>
        <begin position="187"/>
        <end position="198"/>
    </location>
</feature>
<feature type="helix" evidence="49">
    <location>
        <begin position="200"/>
        <end position="203"/>
    </location>
</feature>
<feature type="strand" evidence="49">
    <location>
        <begin position="210"/>
        <end position="218"/>
    </location>
</feature>
<feature type="turn" evidence="49">
    <location>
        <begin position="219"/>
        <end position="221"/>
    </location>
</feature>
<feature type="strand" evidence="49">
    <location>
        <begin position="222"/>
        <end position="235"/>
    </location>
</feature>
<feature type="strand" evidence="49">
    <location>
        <begin position="238"/>
        <end position="243"/>
    </location>
</feature>
<feature type="strand" evidence="49">
    <location>
        <begin position="246"/>
        <end position="248"/>
    </location>
</feature>
<feature type="helix" evidence="46">
    <location>
        <begin position="249"/>
        <end position="251"/>
    </location>
</feature>
<feature type="strand" evidence="49">
    <location>
        <begin position="261"/>
        <end position="263"/>
    </location>
</feature>
<feature type="strand" evidence="49">
    <location>
        <begin position="265"/>
        <end position="274"/>
    </location>
</feature>
<feature type="helix" evidence="49">
    <location>
        <begin position="278"/>
        <end position="280"/>
    </location>
</feature>
<feature type="strand" evidence="49">
    <location>
        <begin position="281"/>
        <end position="286"/>
    </location>
</feature>
<feature type="strand" evidence="49">
    <location>
        <begin position="290"/>
        <end position="292"/>
    </location>
</feature>
<feature type="strand" evidence="49">
    <location>
        <begin position="294"/>
        <end position="296"/>
    </location>
</feature>
<organism>
    <name type="scientific">Homo sapiens</name>
    <name type="common">Human</name>
    <dbReference type="NCBI Taxonomy" id="9606"/>
    <lineage>
        <taxon>Eukaryota</taxon>
        <taxon>Metazoa</taxon>
        <taxon>Chordata</taxon>
        <taxon>Craniata</taxon>
        <taxon>Vertebrata</taxon>
        <taxon>Euteleostomi</taxon>
        <taxon>Mammalia</taxon>
        <taxon>Eutheria</taxon>
        <taxon>Euarchontoglires</taxon>
        <taxon>Primates</taxon>
        <taxon>Haplorrhini</taxon>
        <taxon>Catarrhini</taxon>
        <taxon>Hominidae</taxon>
        <taxon>Homo</taxon>
    </lineage>
</organism>
<keyword id="KW-0002">3D-structure</keyword>
<keyword id="KW-0025">Alternative splicing</keyword>
<keyword id="KW-1003">Cell membrane</keyword>
<keyword id="KW-0966">Cell projection</keyword>
<keyword id="KW-1015">Disulfide bond</keyword>
<keyword id="KW-0256">Endoplasmic reticulum</keyword>
<keyword id="KW-0967">Endosome</keyword>
<keyword id="KW-0325">Glycoprotein</keyword>
<keyword id="KW-0391">Immunity</keyword>
<keyword id="KW-0472">Membrane</keyword>
<keyword id="KW-0490">MHC I</keyword>
<keyword id="KW-1267">Proteomics identification</keyword>
<keyword id="KW-1185">Reference proteome</keyword>
<keyword id="KW-0964">Secreted</keyword>
<keyword id="KW-0732">Signal</keyword>
<keyword id="KW-0812">Transmembrane</keyword>
<keyword id="KW-1133">Transmembrane helix</keyword>
<gene>
    <name evidence="38 45" type="primary">HLA-G</name>
    <name type="synonym">HLA-6.0</name>
    <name type="synonym">HLAG</name>
</gene>
<reference key="1">
    <citation type="journal article" date="1990" name="Nucleic Acids Res.">
        <title>The mRNA of a human class I gene HLA G/HLA 6.0 exhibits a restricted pattern of expression.</title>
        <authorList>
            <person name="Shukla H."/>
            <person name="Swaroop A."/>
            <person name="Srivastava R."/>
            <person name="Weissman S.M."/>
        </authorList>
    </citation>
    <scope>NUCLEOTIDE SEQUENCE [MRNA] (ISOFORM 1)</scope>
    <scope>DEVELOPMENTAL STAGE</scope>
    <source>
        <tissue>Fetal eye</tissue>
    </source>
</reference>
<reference key="2">
    <citation type="journal article" date="1992" name="Proc. Natl. Acad. Sci. U.S.A.">
        <title>Alternative splicing of HLA-G transcripts yields proteins with primary structures resembling both class I and class II antigens.</title>
        <authorList>
            <person name="Ishitani A."/>
            <person name="Geraghty D.E."/>
        </authorList>
    </citation>
    <scope>NUCLEOTIDE SEQUENCE [MRNA] (ISOFORMS 1; 2 AND 3)</scope>
    <scope>ALTERNATIVE SPLICING (ISOFORMS 1; 2 AND 3)</scope>
    <scope>TISSUE SPECIFICITY</scope>
</reference>
<reference key="3">
    <citation type="journal article" date="1987" name="Proc. Natl. Acad. Sci. U.S.A.">
        <title>A human major histocompatibility complex class I gene that encodes a protein with a shortened cytoplasmic segment.</title>
        <authorList>
            <person name="Geraghty D.E."/>
            <person name="Koller B.H."/>
            <person name="Orr H.T."/>
        </authorList>
    </citation>
    <scope>NUCLEOTIDE SEQUENCE [GENOMIC DNA]</scope>
</reference>
<reference key="4">
    <citation type="journal article" date="1999" name="DNA Seq.">
        <title>A 356-Kb sequence of the subtelomeric part of the MHC class I region.</title>
        <authorList>
            <person name="Hampe A."/>
            <person name="Coriton O."/>
            <person name="Andrieux N."/>
            <person name="Carn G."/>
            <person name="Lepourcelet M."/>
            <person name="Mottier S."/>
            <person name="Dreano S."/>
            <person name="Gatius M.T."/>
            <person name="Hitte C."/>
            <person name="Soriano N."/>
            <person name="Galibert F."/>
        </authorList>
    </citation>
    <scope>NUCLEOTIDE SEQUENCE [GENOMIC DNA]</scope>
</reference>
<reference key="5">
    <citation type="submission" date="1999-09" db="EMBL/GenBank/DDBJ databases">
        <title>Homo sapiens 2,229,817bp genomic DNA of 6p21.3 HLA class I region.</title>
        <authorList>
            <person name="Shiina S."/>
            <person name="Tamiya G."/>
            <person name="Oka A."/>
            <person name="Inoko H."/>
        </authorList>
    </citation>
    <scope>NUCLEOTIDE SEQUENCE [LARGE SCALE GENOMIC DNA]</scope>
</reference>
<reference key="6">
    <citation type="journal article" date="1994" name="Folia Biol. (Praha)">
        <title>HLA-G mRNA forms in human trophoblasts and peripheral blood lymphocytes: potential use in prenatal diagnosis.</title>
        <authorList>
            <person name="Moreau P."/>
            <person name="Teyssier M."/>
            <person name="Kirszenbaum M."/>
            <person name="Gluckman E."/>
            <person name="Gourand L."/>
            <person name="Carosella E."/>
            <person name="Dausset J."/>
        </authorList>
    </citation>
    <scope>ALTERNATIVE SPLICING (ISOFORM 4)</scope>
    <scope>TISSUE SPECIFICITY (ISOFORM 4)</scope>
</reference>
<reference key="7">
    <citation type="journal article" date="1994" name="J. Immunol.">
        <title>A soluble form of the HLA-G antigen is encoded by a messenger ribonucleic acid containing intron 4.</title>
        <authorList>
            <person name="Fujii T."/>
            <person name="Ishitani A."/>
            <person name="Geraghty D.E."/>
        </authorList>
    </citation>
    <scope>ALTERNATIVE SPLICING (ISOFORMS 5 AND 6)</scope>
    <scope>SUBCELLULAR LOCATION (ISOFORMS 5 AND 6)</scope>
</reference>
<reference key="8">
    <citation type="journal article" date="1994" name="Proc. Natl. Acad. Sci. U.S.A.">
        <title>An alternatively spliced form of HLA-G mRNA in human trophoblasts and evidence for the presence of HLA-G transcript in adult lymphocytes.</title>
        <authorList>
            <person name="Kirszenbaum M."/>
            <person name="Moreau P."/>
            <person name="Gluckman E."/>
            <person name="Dausset J."/>
            <person name="Carosella E."/>
        </authorList>
    </citation>
    <scope>ALTERNATIVE SPLICING (ISOFORM 4)</scope>
</reference>
<reference key="9">
    <citation type="journal article" date="1995" name="Hum. Immunol.">
        <title>Soluble HLA-G molecule. An alternatively spliced HLA-G mRNA form candidate to encode it in peripheral blood mononuclear cells and human trophoblasts.</title>
        <authorList>
            <person name="Moreau P."/>
            <person name="Carosella E."/>
            <person name="Teyssier M."/>
            <person name="Prost S."/>
            <person name="Gluckman E."/>
            <person name="Dausset J."/>
            <person name="Kirszenbaum M."/>
        </authorList>
    </citation>
    <scope>ALTERNATIVE SPLICING (ISOFORM 5)</scope>
    <scope>SUBCELLULAR LOCATION (ISOFORM 5)</scope>
</reference>
<reference key="10">
    <citation type="journal article" date="2000" name="Hum. Immunol.">
        <title>Identification of HLA-G7 as a new splice variant of the HLA-G mRNA and expression of soluble HLA-G5, -G6, and -G7 transcripts in human transfected cells.</title>
        <authorList>
            <person name="Paul P."/>
            <person name="Cabestre F.A."/>
            <person name="Ibrahim E.C."/>
            <person name="Lefebvre S."/>
            <person name="Khalil-Daher I."/>
            <person name="Vazeux G."/>
            <person name="Quiles R.M."/>
            <person name="Bermond F."/>
            <person name="Dausset J."/>
            <person name="Carosella E.D."/>
        </authorList>
    </citation>
    <scope>ALTERNATIVE SPLICING (ISOFORM 7)</scope>
    <scope>SUBCELLULAR LOCATION (ISOFORM 5)</scope>
    <scope>TISSUE SPECIFICITY (ISOFORMS 5 AND 7)</scope>
    <scope>DEVELOPMENTAL STAGE (ISOFORM 7)</scope>
</reference>
<reference key="11">
    <citation type="journal article" date="1995" name="Immunity">
        <title>The membrane-bound and soluble forms of HLA-G bind identical sets of endogenous peptides but differ with respect to TAP association.</title>
        <authorList>
            <person name="Lee N."/>
            <person name="Malacko A.R."/>
            <person name="Ishitani A."/>
            <person name="Chen M.C."/>
            <person name="Bajorath J."/>
            <person name="Marquardt H."/>
            <person name="Geraghty D.E."/>
        </authorList>
    </citation>
    <scope>FUNCTION (ISOFORMS 1 AND 5)</scope>
    <scope>SUBUNIT (ISOFORMS 1 AND 5)</scope>
    <scope>INTERACTION WITH SELF-PEPTIDE (ISOFORMS 1 AND 5)</scope>
    <scope>SUBCELLULAR LOCATION (ISOFORMS 1 AND 5)</scope>
</reference>
<reference key="12">
    <citation type="journal article" date="1996" name="Curr. Biol.">
        <title>Nonclassical HLA-G molecules are classical peptide presenters.</title>
        <authorList>
            <person name="Diehl M."/>
            <person name="Muenz C."/>
            <person name="Keilholz W."/>
            <person name="Stevanovic S."/>
            <person name="Holmes N."/>
            <person name="Loke Y.W."/>
            <person name="Rammensee H.G."/>
        </authorList>
    </citation>
    <scope>FUNCTION</scope>
    <scope>SUBUNIT</scope>
    <scope>INTERACTION WITH SELF-PEPTIDE</scope>
</reference>
<reference key="13">
    <citation type="journal article" date="1998" name="Immunology">
        <title>Calreticulin associates with non-HLA-A,-B class I proteins in the human choriocarcinoma cell lines JEG-3 and BeWo.</title>
        <authorList>
            <person name="Wainwright S.D."/>
            <person name="Simpson K.L."/>
            <person name="Holmes C.H."/>
        </authorList>
    </citation>
    <scope>SUBUNIT</scope>
    <scope>INTERACTION WITH CALR</scope>
</reference>
<reference key="14">
    <citation type="journal article" date="1999" name="J. Exp. Med.">
        <title>A human histocompatibility leukocyte antigen (HLA)-G-specific receptor expressed on all natural killer cells.</title>
        <authorList>
            <person name="Rajagopalan S."/>
            <person name="Long E.O."/>
        </authorList>
    </citation>
    <scope>FUNCTION (ISOFORM 1)</scope>
    <scope>SUBUNIT (ISOFORM 1)</scope>
    <scope>INTERACTION WITH KIR2DL4</scope>
</reference>
<reference key="15">
    <citation type="journal article" date="2001" name="Immunity">
        <title>The truncated cytoplasmic tail of HLA-G serves a quality-control function in post-ER compartments.</title>
        <authorList>
            <person name="Park B."/>
            <person name="Lee S."/>
            <person name="Kim E."/>
            <person name="Chang S."/>
            <person name="Jin M."/>
            <person name="Ahn K."/>
        </authorList>
    </citation>
    <scope>MUTAGENESIS OF 334-LYS-LYS-335</scope>
    <scope>SUBUNIT</scope>
    <scope>INTERACTION WITH COPB1</scope>
    <scope>MOTIF</scope>
</reference>
<reference key="16">
    <citation type="journal article" date="2001" name="J. Immunol.">
        <title>HLA-G2, -G3, and -G4 isoforms expressed as nonmature cell surface glycoproteins inhibit NK and antigen-specific CTL cytolysis.</title>
        <authorList>
            <person name="Riteau B."/>
            <person name="Rouas-Freiss N."/>
            <person name="Menier C."/>
            <person name="Paul P."/>
            <person name="Dausset J."/>
            <person name="Carosella E.D."/>
        </authorList>
    </citation>
    <scope>FUNCTION</scope>
    <scope>GLYCOSYLATION</scope>
    <scope>SUBCELLULAR LOCATION</scope>
</reference>
<reference key="17">
    <citation type="journal article" date="2002" name="Proc. Natl. Acad. Sci. U.S.A.">
        <title>Disulfide bond-mediated dimerization of HLA-G on the cell surface.</title>
        <authorList>
            <person name="Boyson J.E."/>
            <person name="Erskine R."/>
            <person name="Whitman M.C."/>
            <person name="Chiu M."/>
            <person name="Lau J.M."/>
            <person name="Koopman L.A."/>
            <person name="Valter M.M."/>
            <person name="Angelisova P."/>
            <person name="Horejsi V."/>
            <person name="Strominger J.L."/>
        </authorList>
    </citation>
    <scope>SUBUNIT</scope>
    <scope>MUTAGENESIS OF CYS-66</scope>
    <scope>DISULFIDE BOND AT CYS-66</scope>
</reference>
<reference key="18">
    <citation type="journal article" date="2003" name="J. Biol. Chem.">
        <title>An essential function of tapasin in quality control of HLA-G molecules.</title>
        <authorList>
            <person name="Park B."/>
            <person name="Ahn K."/>
        </authorList>
    </citation>
    <scope>SUBUNIT</scope>
    <scope>INTERACTION WITH COPB1</scope>
    <scope>MUTAGENESIS OF GLU-138</scope>
</reference>
<reference key="19">
    <citation type="journal article" date="2003" name="J. Immunol.">
        <title>Complexes of HLA-G protein on the cell surface are important for leukocyte Ig-like receptor-1 function.</title>
        <authorList>
            <person name="Gonen-Gross T."/>
            <person name="Achdout H."/>
            <person name="Gazit R."/>
            <person name="Hanna J."/>
            <person name="Mizrahi S."/>
            <person name="Markel G."/>
            <person name="Goldman-Wohl D."/>
            <person name="Yagel S."/>
            <person name="Horejsi V."/>
            <person name="Levy O."/>
            <person name="Baniyash M."/>
            <person name="Mandelboim O."/>
        </authorList>
    </citation>
    <scope>DISULFIDE BOND</scope>
    <scope>MUTAGENESIS OF CYS-66 AND CYS-171</scope>
    <scope>SUBUNIT</scope>
    <scope>INTERACTION WITH LILRB1</scope>
</reference>
<reference key="20">
    <citation type="journal article" date="2003" name="Proc. Natl. Acad. Sci. U.S.A.">
        <title>Human inhibitory receptors Ig-like transcript 2 (ILT2) and ILT4 compete with CD8 for MHC class I binding and bind preferentially to HLA-G.</title>
        <authorList>
            <person name="Shiroishi M."/>
            <person name="Tsumoto K."/>
            <person name="Amano K."/>
            <person name="Shirakihara Y."/>
            <person name="Colonna M."/>
            <person name="Braud V.M."/>
            <person name="Allan D.S.J."/>
            <person name="Makadzange A."/>
            <person name="Rowland-Jones S."/>
            <person name="Willcox B.E."/>
            <person name="Jones E.Y."/>
            <person name="van der Merwe P.A."/>
            <person name="Kumagai I."/>
            <person name="Maenaka K."/>
        </authorList>
    </citation>
    <scope>SUBUNIT</scope>
    <scope>INTERACTION WITH LILRB1 AND LILRB2</scope>
    <scope>INTERACTION WITH CD8A</scope>
</reference>
<reference key="21">
    <citation type="journal article" date="2006" name="Blood">
        <title>Soluble HLA-G1 inhibits angiogenesis through an apoptotic pathway and by direct binding to CD160 receptor expressed by endothelial cells.</title>
        <authorList>
            <person name="Fons P."/>
            <person name="Chabot S."/>
            <person name="Cartwright J.E."/>
            <person name="Lenfant F."/>
            <person name="L'Faqihi F."/>
            <person name="Giustiniani J."/>
            <person name="Herault J.P."/>
            <person name="Gueguen G."/>
            <person name="Bono F."/>
            <person name="Savi P."/>
            <person name="Aguerre-Girr M."/>
            <person name="Fournel S."/>
            <person name="Malecaze F."/>
            <person name="Bensussan A."/>
            <person name="Plouet J."/>
            <person name="Le Bouteiller P."/>
        </authorList>
    </citation>
    <scope>FUNCTION (ISOFORM 1)</scope>
    <scope>SUBUNIT</scope>
    <scope>INTERACTION WITH CD160</scope>
</reference>
<reference key="22">
    <citation type="journal article" date="2006" name="Hum. Reprod.">
        <title>Progesterone enhances HLA-G gene expression in JEG-3 choriocarcinoma cells and human cytotrophoblasts in vitro.</title>
        <authorList>
            <person name="Yie S.M."/>
            <person name="Li L.H."/>
            <person name="Li G.M."/>
            <person name="Xiao R."/>
            <person name="Librach C.L."/>
        </authorList>
    </citation>
    <scope>TISSUE SPECIFICITY</scope>
    <scope>INDUCTION BY PROGESTERONE</scope>
</reference>
<reference key="23">
    <citation type="journal article" date="2006" name="PLoS Biol.">
        <title>Activation of NK cells by an endocytosed receptor for soluble HLA-G.</title>
        <authorList>
            <person name="Rajagopalan S."/>
            <person name="Bryceson Y.T."/>
            <person name="Kuppusamy S.P."/>
            <person name="Geraghty D.E."/>
            <person name="van der Meer A."/>
            <person name="Joosten I."/>
            <person name="Long E.O."/>
        </authorList>
    </citation>
    <scope>FUNCTION (ISOFORMS 1 AND 5)</scope>
    <scope>SUBCELLULAR LOCATION</scope>
    <scope>SUBUNIT</scope>
    <scope>INTERACTION WITH KIR2DL4</scope>
</reference>
<reference key="24">
    <citation type="journal article" date="2009" name="Proc. Natl. Acad. Sci. U.S.A.">
        <title>HLA-G homodimer-induced cytokine secretion through HLA-G receptors on human decidual macrophages and natural killer cells.</title>
        <authorList>
            <person name="Li C."/>
            <person name="Houser B.L."/>
            <person name="Nicotra M.L."/>
            <person name="Strominger J.L."/>
        </authorList>
    </citation>
    <scope>FUNCTION (ISOFORMS 1 AND 5)</scope>
</reference>
<reference key="25">
    <citation type="journal article" date="2010" name="Blood">
        <title>Differentiation of type 1 T regulatory cells (Tr1) by tolerogenic DC-10 requires the IL-10-dependent ILT4/HLA-G pathway.</title>
        <authorList>
            <person name="Gregori S."/>
            <person name="Tomasoni D."/>
            <person name="Pacciani V."/>
            <person name="Scirpoli M."/>
            <person name="Battaglia M."/>
            <person name="Magnani C.F."/>
            <person name="Hauben E."/>
            <person name="Roncarolo M.G."/>
        </authorList>
    </citation>
    <scope>FUNCTION</scope>
    <scope>TISSUE SPECIFICITY</scope>
    <scope>SUBCELLULAR LOCATION</scope>
    <scope>INDUCTION BY IL10</scope>
</reference>
<reference key="26">
    <citation type="journal article" date="2010" name="Sci. Signal.">
        <title>DNA-PKcs controls an endosomal signaling pathway for a proinflammatory response by natural killer cells.</title>
        <authorList>
            <person name="Rajagopalan S."/>
            <person name="Moyle M.W."/>
            <person name="Joosten I."/>
            <person name="Long E.O."/>
        </authorList>
    </citation>
    <scope>FUNCTION</scope>
</reference>
<reference key="27">
    <citation type="journal article" date="2012" name="Proc. Natl. Acad. Sci. U.S.A.">
        <title>Cellular senescence induced by CD158d reprograms natural killer cells to promote vascular remodeling.</title>
        <authorList>
            <person name="Rajagopalan S."/>
            <person name="Long E.O."/>
        </authorList>
    </citation>
    <scope>FUNCTION</scope>
</reference>
<reference key="28">
    <citation type="journal article" date="2013" name="Mol. Cell. Biochem.">
        <title>Matrix metalloproteinase-2 (MMP-2) generates soluble HLA-G1 by cell surface proteolytic shedding.</title>
        <authorList>
            <person name="Rizzo R."/>
            <person name="Trentini A."/>
            <person name="Bortolotti D."/>
            <person name="Manfrinato M.C."/>
            <person name="Rotola A."/>
            <person name="Castellazzi M."/>
            <person name="Melchiorri L."/>
            <person name="Di Luca D."/>
            <person name="Dallocchio F."/>
            <person name="Fainardi E."/>
            <person name="Bellini T."/>
        </authorList>
    </citation>
    <scope>PROTEOLYTIC PROCESSING (ISOFORM 1)</scope>
    <scope>SUBCELLULAR LOCATION (ISOFORM 1)</scope>
</reference>
<reference key="29">
    <citation type="journal article" date="2014" name="J. Immunol.">
        <title>Binding of HLA-G to ITIM-bearing Ig-like transcript 2 receptor suppresses B cell responses.</title>
        <authorList>
            <person name="Naji A."/>
            <person name="Menier C."/>
            <person name="Morandi F."/>
            <person name="Agaugue S."/>
            <person name="Maki G."/>
            <person name="Ferretti E."/>
            <person name="Bruel S."/>
            <person name="Pistoia V."/>
            <person name="Carosella E.D."/>
            <person name="Rouas-Freiss N."/>
        </authorList>
    </citation>
    <scope>FUNCTION (ISOFORMS 1 AND 5)</scope>
    <scope>TISSUE SPECIFICITY</scope>
</reference>
<reference key="30">
    <citation type="journal article" date="2015" name="Proc. Natl. Acad. Sci. U.S.A.">
        <title>The HLA-G cycle provides for both NK tolerance and immunity at the maternal-fetal interface.</title>
        <authorList>
            <person name="Tilburgs T."/>
            <person name="Evans J.H."/>
            <person name="Crespo A.C."/>
            <person name="Strominger J.L."/>
        </authorList>
    </citation>
    <scope>FUNCTION</scope>
    <scope>SUBCELLULAR LOCATION</scope>
    <scope>DEVELOPMENTAL STAGE</scope>
</reference>
<reference key="31">
    <citation type="journal article" date="2017" name="Eur. J. Immunol.">
        <title>HLA-G promotes myeloid-derived suppressor cell accumulation and suppressive activity during human pregnancy through engagement of the receptor ILT4.</title>
        <authorList>
            <person name="Koestlin N."/>
            <person name="Ostermeir A.L."/>
            <person name="Spring B."/>
            <person name="Schwarz J."/>
            <person name="Marme A."/>
            <person name="Walter C.B."/>
            <person name="Poets C.F."/>
            <person name="Gille C."/>
        </authorList>
    </citation>
    <scope>FUNCTION (ISOFORM 1)</scope>
</reference>
<reference key="32">
    <citation type="journal article" date="2017" name="Immunity">
        <title>Natural Killer Cells Promote Fetal Development through the Secretion of Growth-Promoting Factors.</title>
        <authorList>
            <person name="Fu B."/>
            <person name="Zhou Y."/>
            <person name="Ni X."/>
            <person name="Tong X."/>
            <person name="Xu X."/>
            <person name="Dong Z."/>
            <person name="Sun R."/>
            <person name="Tian Z."/>
            <person name="Wei H."/>
        </authorList>
    </citation>
    <scope>FUNCTION</scope>
    <scope>DEVELOPMENTAL STAGE</scope>
</reference>
<reference key="33">
    <citation type="journal article" date="2017" name="J. Immunol.">
        <title>Class II-like structural features and strong receptor binding of the nonclassical HLA-G2 isoform homodimer.</title>
        <authorList>
            <person name="Kuroki K."/>
            <person name="Mio K."/>
            <person name="Takahashi A."/>
            <person name="Matsubara H."/>
            <person name="Kasai Y."/>
            <person name="Manaka S."/>
            <person name="Kikkawa M."/>
            <person name="Hamada D."/>
            <person name="Sato C."/>
            <person name="Maenaka K."/>
        </authorList>
    </citation>
    <scope>SUBUNIT (ISOFORM 2)</scope>
    <scope>INTERACTION WITH LILRB2 (ISOFORM 2)</scope>
    <scope>MUTAGENESIS OF CYS-66</scope>
</reference>
<reference key="34">
    <citation type="journal article" date="2023" name="Nat. Immunol.">
        <title>HLA class I signal peptide polymorphism determines the level of CD94/NKG2-HLA-E-mediated regulation of effector cell responses.</title>
        <authorList>
            <person name="Lin Z."/>
            <person name="Bashirova A.A."/>
            <person name="Viard M."/>
            <person name="Garner L."/>
            <person name="Quastel M."/>
            <person name="Beiersdorfer M."/>
            <person name="Kasprzak W.K."/>
            <person name="Akdag M."/>
            <person name="Yuki Y."/>
            <person name="Ojeda P."/>
            <person name="Das S."/>
            <person name="Andresson T."/>
            <person name="Naranbhai V."/>
            <person name="Horowitz A."/>
            <person name="McMichael A.J."/>
            <person name="Hoelzemer A."/>
            <person name="Gillespie G.M."/>
            <person name="Garcia-Beltran W.F."/>
            <person name="Carrington M."/>
        </authorList>
    </citation>
    <scope>DOMAIN</scope>
</reference>
<reference key="35">
    <citation type="journal article" date="2005" name="Proc. Natl. Acad. Sci. U.S.A.">
        <title>Crystal structure of HLA-G: a nonclassical MHC class I molecule expressed at the fetal-maternal interface.</title>
        <authorList>
            <person name="Clements C.S."/>
            <person name="Kjer-Nielsen L."/>
            <person name="Kostenko L."/>
            <person name="Hoare H.L."/>
            <person name="Dunstone M.A."/>
            <person name="Moses E."/>
            <person name="Freed K."/>
            <person name="Brooks A.G."/>
            <person name="Rossjohn J."/>
            <person name="McCluskey J."/>
        </authorList>
    </citation>
    <scope>X-RAY CRYSTALLOGRAPHY (1.9 ANGSTROMS) OF 26-300 IN COMPLEX WITH SELF-PEPTIDE</scope>
    <scope>DISULFIDE BOND</scope>
</reference>
<reference key="36">
    <citation type="journal article" date="2006" name="J. Biol. Chem.">
        <title>Efficient leukocyte Ig-like receptor signaling and crystal structure of disulfide-linked HLA-G dimer.</title>
        <authorList>
            <person name="Shiroishi M."/>
            <person name="Kuroki K."/>
            <person name="Ose T."/>
            <person name="Rasubala L."/>
            <person name="Shiratori I."/>
            <person name="Arase H."/>
            <person name="Tsumoto K."/>
            <person name="Kumagai I."/>
            <person name="Kohda D."/>
            <person name="Maenaka K."/>
        </authorList>
    </citation>
    <scope>X-RAY CRYSTALLOGRAPHY (3.2 ANGSTROMS) OF 25-300 IN COMPLEX WITH SELF-PEPTIDE</scope>
    <scope>DISULFIDE BOND</scope>
    <scope>INTERACTION WITH LILRB1 AND LILRB2</scope>
</reference>
<reference key="37">
    <citation type="journal article" date="2006" name="Proc. Natl. Acad. Sci. U.S.A.">
        <title>Structural basis for recognition of the nonclassical MHC molecule HLA-G by the leukocyte Ig-like receptor B2 (LILRB2/LIR2/ILT4/CD85d).</title>
        <authorList>
            <person name="Shiroishi M."/>
            <person name="Kuroki K."/>
            <person name="Rasubala L."/>
            <person name="Tsumoto K."/>
            <person name="Kumagai I."/>
            <person name="Kurimoto E."/>
            <person name="Kato K."/>
            <person name="Kohda D."/>
            <person name="Maenaka K."/>
        </authorList>
    </citation>
    <scope>X-RAY CRYSTALLOGRAPHY (2.50 ANGSTROMS) OF 25-300 IN COMPLEX WITH SELF-PEPTIDE</scope>
    <scope>DISULFIDE BOND</scope>
    <scope>INTERACTION WITH LILRB1 AND LILRB2</scope>
</reference>
<reference key="38">
    <citation type="journal article" date="2010" name="J. Mol. Biol.">
        <title>The structure and stability of the monomorphic HLA-G are influenced by the nature of the bound peptide.</title>
        <authorList>
            <person name="Walpole N.G."/>
            <person name="Kjer-Nielsen L."/>
            <person name="Kostenko L."/>
            <person name="McCluskey J."/>
            <person name="Brooks A.G."/>
            <person name="Rossjohn J."/>
            <person name="Clements C.S."/>
        </authorList>
    </citation>
    <scope>X-RAY CRYSTALLOGRAPHY (1.70 ANGSTROMS) OF 26-298 IN COMPLEX WITH SELF-PEPTIDE</scope>
    <scope>DISULFIDE BOND</scope>
    <scope>SUBUNIT</scope>
</reference>
<comment type="function">
    <molecule>Isoform 1</molecule>
    <text evidence="3 5 14 16 18 20 21 22 24 25 26 28 31 35">Non-classical major histocompatibility class Ib molecule involved in immune regulatory processes at the maternal-fetal interface (PubMed:19304799, PubMed:23184984, PubMed:29262349). In complex with B2M/beta-2 microglobulin binds a limited repertoire of nonamer self-peptides derived from intracellular proteins including histones and ribosomal proteins (PubMed:7584149, PubMed:8805247). Peptide-bound HLA-G-B2M complex acts as a ligand for inhibitory/activating KIR2DL4, LILRB1 and LILRB2 receptors on uterine immune cells to promote fetal development while maintaining maternal-fetal tolerance (PubMed:16366734, PubMed:19304799, PubMed:20448110, PubMed:23184984, PubMed:27859042, PubMed:29262349). Upon interaction with KIR2DL4 and LILRB1 receptors on decidual NK cells, it triggers NK cell senescence-associated secretory phenotype as a molecular switch to promote vascular remodeling and fetal growth in early pregnancy (PubMed:16366734, PubMed:19304799, PubMed:23184984, PubMed:29262349). Through interaction with KIR2DL4 receptor on decidual macrophages induces pro-inflammatory cytokine production mainly associated with tissue remodeling (PubMed:19304799). Through interaction with LILRB2 receptor triggers differentiation of type 1 regulatory T cells and myeloid-derived suppressor cells, both of which actively maintain maternal-fetal tolerance (PubMed:20448110, PubMed:27859042). May play a role in balancing tolerance and antiviral-immunity at maternal-fetal interface by keeping in check the effector functions of NK, CD8+ T cells and B cells (PubMed:10190900, PubMed:11290782, PubMed:24453251). Reprograms B cells toward an immune suppressive phenotype via LILRB1 (PubMed:24453251). May induce immune activation/suppression via intercellular membrane transfer (trogocytosis), likely enabling interaction with KIR2DL4, which resides mostly in endosomes (PubMed:20179272, PubMed:26460007). Through interaction with the inhibitory receptor CD160 on endothelial cells may control angiogenesis in immune privileged sites (PubMed:16809620).</text>
</comment>
<comment type="function">
    <molecule>Isoform 2</molecule>
    <text evidence="5 44">Likely does not bind B2M and presents peptides. Negatively regulates NK cell- and CD8+ T cell-mediated cytotoxicity (PubMed:11290782).</text>
</comment>
<comment type="function">
    <molecule>Isoform 3</molecule>
    <text evidence="5 44">Likely does not bind B2M and presents peptides. Negatively regulates NK cell- and CD8+ T cell-mediated cytotoxicity (PubMed:11290782).</text>
</comment>
<comment type="function">
    <molecule>Isoform 4</molecule>
    <text evidence="5 44">Likely does not bind B2M and presents peptides. Negatively regulates NK cell- and CD8+ T cell-mediated cytotoxicity (PubMed:11290782).</text>
</comment>
<comment type="function">
    <molecule>Isoform 5</molecule>
    <text evidence="14 18 21 22 24 28 31 35">Non-classical major histocompatibility class Ib molecule involved in immune regulatory processes at the maternal-fetal interface (PubMed:19304799, PubMed:23184984, PubMed:29262349). In complex with B2M/beta-2 microglobulin binds a limited repertoire of nonamer self-peptides derived from intracellular proteins including histones and ribosomal proteins (PubMed:7584149, PubMed:8805247). Peptide-bound HLA-G-B2M complex acts as a ligand for inhibitory/activating KIR2DL4, LILRB1 and LILRB2 receptors on uterine immune cells to promote fetal development while maintaining maternal-fetal tolerance (PubMed:16366734, PubMed:19304799, PubMed:20448110, PubMed:23184984, PubMed:29262349). Upon interaction with KIR2DL4 and LILRB1 receptors on decidual NK cells, it triggers NK cell senescence-associated secretory phenotype as a molecular switch to promote vascular remodeling and fetal growth in early pregnancy (PubMed:16366734, PubMed:19304799, PubMed:23184984, PubMed:29262349). Through interaction with KIR2DL4 receptor on decidual macrophages induces pro-inflammatory cytokine production mainly associated with tissue remodeling (PubMed:19304799). Through interaction with LILRB2 receptor triggers differentiation of type 1 regulatory T cells and myeloid-derived suppressor cells, both of which actively maintain maternal-fetal tolerance (PubMed:20448110). Reprograms B cells toward an immune suppressive phenotype via LILRB1 (PubMed:24453251).</text>
</comment>
<comment type="function">
    <molecule>Isoform 6</molecule>
    <text evidence="44">Likely does not bind B2M and presents peptides.</text>
</comment>
<comment type="function">
    <molecule>Isoform 7</molecule>
    <text evidence="44">Likely does not bind B2M and presents peptides.</text>
</comment>
<comment type="subunit">
    <text evidence="3 6 7 8 9 10 14 15 16 17 27 31 35 36">Forms a heterotrimer with B2M and a self-peptide (peptide-bound HLA-G-B2M) (PubMed:7584149, PubMed:8805247). HLA-G-B2M complex interacts with components of the antigen processing machinery TAPBP and TAP1-TAP2 complex; this interaction is required for loading of high affinity peptides and heterotrimer translocation to the cell surface (PubMed:7584149). Interacts with CALCR; this interaction is required for appropriate folding (PubMed:9640257). Interacts with COPB1; this interaction mediates the endoplasmic reticulum (ER) retrieval of HLA-G-B2M complexes that bind low affinity peptides (PubMed:11520457, PubMed:12582157). On the cell surface, peptide-bound HLA-G-B2M molecules (referred to as monomers) can form disulfide-linked homomultimers, homodimers and homotrimers (PubMed:12454284, PubMed:12874224, PubMed:16455647). Interacts with KIR2DL4; this interaction is direct (PubMed:10190900, PubMed:16366734). Interacts with LILRB1 and LILRB2 receptors; this interaction is direct (PubMed:12853576, PubMed:16366734, PubMed:16455647, PubMed:17056715). Interacts with CD160; this interactions is direct (PubMed:16809620). Interacts with CD8A homodimer; this interaction is direct and might down-regulate T cell receptor signaling (PubMed:12853576). Isoform 2: Forms a non-disulfide-linked homodimer and interacts with LILRB2 (PubMed:28348268).</text>
</comment>
<comment type="interaction">
    <interactant intactId="EBI-1043063">
        <id>P17693</id>
    </interactant>
    <interactant intactId="EBI-1043063">
        <id>P17693</id>
        <label>HLA-G</label>
    </interactant>
    <organismsDiffer>false</organismsDiffer>
    <experiments>5</experiments>
</comment>
<comment type="interaction">
    <interactant intactId="EBI-1043063">
        <id>P17693</id>
    </interactant>
    <interactant intactId="EBI-2805262">
        <id>Q8NHL6</id>
        <label>LILRB1</label>
    </interactant>
    <organismsDiffer>false</organismsDiffer>
    <experiments>8</experiments>
</comment>
<comment type="interaction">
    <interactant intactId="EBI-1043063">
        <id>P17693</id>
    </interactant>
    <interactant intactId="EBI-2816428">
        <id>Q8N423</id>
        <label>LILRB2</label>
    </interactant>
    <organismsDiffer>false</organismsDiffer>
    <experiments>10</experiments>
</comment>
<comment type="interaction">
    <interactant intactId="EBI-16586375">
        <id>P17693-2</id>
    </interactant>
    <interactant intactId="EBI-16586375">
        <id>P17693-2</id>
        <label>HLA-G</label>
    </interactant>
    <organismsDiffer>false</organismsDiffer>
    <experiments>3</experiments>
</comment>
<comment type="interaction">
    <interactant intactId="EBI-16586375">
        <id>P17693-2</id>
    </interactant>
    <interactant intactId="EBI-2816428">
        <id>Q8N423</id>
        <label>LILRB2</label>
    </interactant>
    <organismsDiffer>false</organismsDiffer>
    <experiments>4</experiments>
</comment>
<comment type="interaction">
    <interactant intactId="EBI-16586455">
        <id>P17693-5</id>
    </interactant>
    <interactant intactId="EBI-2816428">
        <id>Q8N423</id>
        <label>LILRB2</label>
    </interactant>
    <organismsDiffer>false</organismsDiffer>
    <experiments>2</experiments>
</comment>
<comment type="interaction">
    <interactant intactId="EBI-16586550">
        <id>P17693-6</id>
    </interactant>
    <interactant intactId="EBI-2816428">
        <id>Q8N423</id>
        <label>LILRB2</label>
    </interactant>
    <organismsDiffer>false</organismsDiffer>
    <experiments>3</experiments>
</comment>
<comment type="subcellular location">
    <molecule>Isoform 1</molecule>
    <subcellularLocation>
        <location evidence="21 31">Cell membrane</location>
        <topology evidence="1">Single-pass type I membrane protein</topology>
    </subcellularLocation>
    <subcellularLocation>
        <location evidence="6">Endoplasmic reticulum membrane</location>
    </subcellularLocation>
    <subcellularLocation>
        <location evidence="14">Early endosome membrane</location>
    </subcellularLocation>
</comment>
<comment type="subcellular location">
    <molecule>Soluble HLA class I histocompatibility antigen, alpha chain G</molecule>
    <subcellularLocation>
        <location evidence="23">Secreted</location>
    </subcellularLocation>
</comment>
<comment type="subcellular location">
    <molecule>Isoform 2</molecule>
    <subcellularLocation>
        <location evidence="5">Cell membrane</location>
        <topology evidence="1">Single-pass type I membrane protein</topology>
    </subcellularLocation>
</comment>
<comment type="subcellular location">
    <molecule>Isoform 3</molecule>
    <subcellularLocation>
        <location evidence="5">Cell membrane</location>
        <topology evidence="1">Single-pass type I membrane protein</topology>
    </subcellularLocation>
</comment>
<comment type="subcellular location">
    <molecule>Isoform 4</molecule>
    <subcellularLocation>
        <location evidence="5">Cell membrane</location>
        <topology evidence="1">Single-pass type I membrane protein</topology>
    </subcellularLocation>
</comment>
<comment type="subcellular location">
    <molecule>Isoform 5</molecule>
    <subcellularLocation>
        <location evidence="4 30 31 33">Secreted</location>
    </subcellularLocation>
    <subcellularLocation>
        <location evidence="14">Early endosome</location>
    </subcellularLocation>
</comment>
<comment type="subcellular location">
    <molecule>Isoform 6</molecule>
    <subcellularLocation>
        <location evidence="33">Secreted</location>
    </subcellularLocation>
</comment>
<comment type="subcellular location">
    <molecule>Isoform 7</molecule>
    <subcellularLocation>
        <location evidence="4">Secreted</location>
    </subcellularLocation>
</comment>
<comment type="subcellular location">
    <subcellularLocation>
        <location evidence="25">Cell projection</location>
        <location evidence="25">Filopodium membrane</location>
    </subcellularLocation>
    <text evidence="25">HLA-G trogocytosis from extravillous trophoblast's filopodia occurs in the majority of decidual NK cells.</text>
</comment>
<comment type="alternative products">
    <event type="alternative splicing"/>
    <isoform>
        <id>P17693-1</id>
        <name>1</name>
        <name evidence="38">HLA-G1</name>
        <sequence type="displayed"/>
    </isoform>
    <isoform>
        <id>P17693-2</id>
        <name>2</name>
        <name evidence="38">HLA-G2</name>
        <sequence type="described" ref="VSP_059192 VSP_061749"/>
    </isoform>
    <isoform>
        <id>P17693-3</id>
        <name>3</name>
        <name evidence="38">HLA-G3</name>
        <sequence type="described" ref="VSP_059191"/>
    </isoform>
    <isoform>
        <id>P17693-4</id>
        <name>4</name>
        <name evidence="43">HLA-G.3-5</name>
        <name evidence="41">HLA-G4</name>
        <sequence type="described" ref="VSP_059196"/>
    </isoform>
    <isoform>
        <id>P17693-5</id>
        <name>5</name>
        <name evidence="42">HLA-G1sol</name>
        <name evidence="40">HLA-G5</name>
        <sequence type="described" ref="VSP_059197"/>
    </isoform>
    <isoform>
        <id>P17693-6</id>
        <name>6</name>
        <name evidence="42">HLA-G2sol</name>
        <name evidence="37">HLA-G6</name>
        <sequence type="described" ref="VSP_059192 VSP_059195 VSP_059197"/>
    </isoform>
    <isoform>
        <id>P17693-7</id>
        <name>7</name>
        <name evidence="37">HLA-G7</name>
        <sequence type="described" ref="VSP_059193 VSP_059194"/>
    </isoform>
</comment>
<comment type="tissue specificity">
    <text>Expressed in adult eye (PubMed:1570318). Expressed in immune cell subsets including monocytes, myeloid and plasmacytoid dendritic cells and regulatory T cells (Tr1)(at protein level) (PubMed:20448110). Secreted by follicular dendritic cell and follicular helper T cells (PubMed:24453251).</text>
</comment>
<comment type="tissue specificity">
    <molecule>Isoform 5</molecule>
    <text evidence="4">Detected in physiological fluids including amniotic fluid and serum.</text>
</comment>
<comment type="tissue specificity">
    <molecule>Isoform 7</molecule>
    <text evidence="4">Expressed in placenta, amniotic membrane, skin, cord blood and peripheral blood mononuclear cells.</text>
</comment>
<comment type="developmental stage">
    <text>Expressed at the morula stage (at protein level) (PubMed:29262349). Expressed in extravillous trophoblast and cytotrophoblast (PubMed:16210391, PubMed:26460007, PubMed:7589701). Expressed in fetal eye and thymus (PubMed:2336406).</text>
</comment>
<comment type="developmental stage">
    <molecule>Isoform 7</molecule>
    <text evidence="4">Expressed in fetal liver.</text>
</comment>
<comment type="induction">
    <text evidence="13 21">Up-regulated by immunosuppressive cytokine IL10 on dendritic cells and CD4+ T cells (PubMed:20448110). Up-regulated by progesterone in cytotrophoblasts (PubMed:16210391).</text>
</comment>
<comment type="domain">
    <text evidence="29">The VL9 peptide/epitope (VMAPRTLFL) derived from the signal sequence is loaded onto HLA-E and enables HLA-E expression at the plasma membrane. Confers strong recognition by KLRD1-KLRC1 or KLRD1-KLRC2 receptors on NK cells.</text>
</comment>
<comment type="PTM">
    <text evidence="5">N-glycosylated.</text>
</comment>
<comment type="PTM">
    <molecule>Soluble HLA class I histocompatibility antigen, alpha chain G</molecule>
    <text evidence="23">Produced by proteolytic cleavage at the cell surface (shedding) by matrix metalloproteinase MMP2.</text>
</comment>
<comment type="similarity">
    <text evidence="44">Belongs to the MHC class I family.</text>
</comment>
<comment type="online information" name="Atlas of Genetics and Cytogenetics in Oncology and Haematology">
    <link uri="https://atlasgeneticsoncology.org/gene/43744/HLAG"/>
</comment>
<evidence type="ECO:0000255" key="1"/>
<evidence type="ECO:0000255" key="2">
    <source>
        <dbReference type="PROSITE-ProRule" id="PRU00114"/>
    </source>
</evidence>
<evidence type="ECO:0000269" key="3">
    <source>
    </source>
</evidence>
<evidence type="ECO:0000269" key="4">
    <source>
    </source>
</evidence>
<evidence type="ECO:0000269" key="5">
    <source>
    </source>
</evidence>
<evidence type="ECO:0000269" key="6">
    <source>
    </source>
</evidence>
<evidence type="ECO:0000269" key="7">
    <source>
    </source>
</evidence>
<evidence type="ECO:0000269" key="8">
    <source>
    </source>
</evidence>
<evidence type="ECO:0000269" key="9">
    <source>
    </source>
</evidence>
<evidence type="ECO:0000269" key="10">
    <source>
    </source>
</evidence>
<evidence type="ECO:0000269" key="11">
    <source>
    </source>
</evidence>
<evidence type="ECO:0000269" key="12">
    <source>
    </source>
</evidence>
<evidence type="ECO:0000269" key="13">
    <source>
    </source>
</evidence>
<evidence type="ECO:0000269" key="14">
    <source>
    </source>
</evidence>
<evidence type="ECO:0000269" key="15">
    <source>
    </source>
</evidence>
<evidence type="ECO:0000269" key="16">
    <source>
    </source>
</evidence>
<evidence type="ECO:0000269" key="17">
    <source>
    </source>
</evidence>
<evidence type="ECO:0000269" key="18">
    <source>
    </source>
</evidence>
<evidence type="ECO:0000269" key="19">
    <source>
    </source>
</evidence>
<evidence type="ECO:0000269" key="20">
    <source>
    </source>
</evidence>
<evidence type="ECO:0000269" key="21">
    <source>
    </source>
</evidence>
<evidence type="ECO:0000269" key="22">
    <source>
    </source>
</evidence>
<evidence type="ECO:0000269" key="23">
    <source>
    </source>
</evidence>
<evidence type="ECO:0000269" key="24">
    <source>
    </source>
</evidence>
<evidence type="ECO:0000269" key="25">
    <source>
    </source>
</evidence>
<evidence type="ECO:0000269" key="26">
    <source>
    </source>
</evidence>
<evidence type="ECO:0000269" key="27">
    <source>
    </source>
</evidence>
<evidence type="ECO:0000269" key="28">
    <source>
    </source>
</evidence>
<evidence type="ECO:0000269" key="29">
    <source>
    </source>
</evidence>
<evidence type="ECO:0000269" key="30">
    <source>
    </source>
</evidence>
<evidence type="ECO:0000269" key="31">
    <source>
    </source>
</evidence>
<evidence type="ECO:0000269" key="32">
    <source>
    </source>
</evidence>
<evidence type="ECO:0000269" key="33">
    <source>
    </source>
</evidence>
<evidence type="ECO:0000269" key="34">
    <source>
    </source>
</evidence>
<evidence type="ECO:0000269" key="35">
    <source>
    </source>
</evidence>
<evidence type="ECO:0000269" key="36">
    <source>
    </source>
</evidence>
<evidence type="ECO:0000303" key="37">
    <source>
    </source>
</evidence>
<evidence type="ECO:0000303" key="38">
    <source>
    </source>
</evidence>
<evidence type="ECO:0000303" key="39">
    <source>
    </source>
</evidence>
<evidence type="ECO:0000303" key="40">
    <source>
    </source>
</evidence>
<evidence type="ECO:0000303" key="41">
    <source>
    </source>
</evidence>
<evidence type="ECO:0000303" key="42">
    <source>
    </source>
</evidence>
<evidence type="ECO:0000303" key="43">
    <source>
    </source>
</evidence>
<evidence type="ECO:0000305" key="44"/>
<evidence type="ECO:0000312" key="45">
    <source>
        <dbReference type="HGNC" id="HGNC:4964"/>
    </source>
</evidence>
<evidence type="ECO:0007829" key="46">
    <source>
        <dbReference type="PDB" id="1YDP"/>
    </source>
</evidence>
<evidence type="ECO:0007829" key="47">
    <source>
        <dbReference type="PDB" id="2D31"/>
    </source>
</evidence>
<evidence type="ECO:0007829" key="48">
    <source>
        <dbReference type="PDB" id="2DYP"/>
    </source>
</evidence>
<evidence type="ECO:0007829" key="49">
    <source>
        <dbReference type="PDB" id="3KYO"/>
    </source>
</evidence>
<name>HLAG_HUMAN</name>
<accession>P17693</accession>
<sequence>MVVMAPRTLFLLLSGALTLTETWAGSHSMRYFSAAVSRPGRGEPRFIAMGYVDDTQFVRFDSDSACPRMEPRAPWVEQEGPEYWEEETRNTKAHAQTDRMNLQTLRGYYNQSEASSHTLQWMIGCDLGSDGRLLRGYEQYAYDGKDYLALNEDLRSWTAADTAAQISKRKCEAANVAEQRRAYLEGTCVEWLHRYLENGKEMLQRADPPKTHVTHHPVFDYEATLRCWALGFYPAEIILTWQRDGEDQTQDVELVETRPAGDGTFQKWAAVVVPSGEEQRYTCHVQHEGLPEPLMLRWKQSSLPTIPIMGIVAGLVVLAAVVTGAAVAAVLWRKKSSD</sequence>
<proteinExistence type="evidence at protein level"/>